<keyword id="KW-0903">Direct protein sequencing</keyword>
<organismHost>
    <name type="scientific">Crustacea</name>
    <dbReference type="NCBI Taxonomy" id="6657"/>
</organismHost>
<accession>P82006</accession>
<name>V14K_WSSV</name>
<feature type="chain" id="PRO_0000222994" description="14.5 kDa structural polyprotein">
    <location>
        <begin position="1"/>
        <end position="12" status="greater than"/>
    </location>
</feature>
<feature type="non-terminal residue">
    <location>
        <position position="12"/>
    </location>
</feature>
<reference key="1">
    <citation type="journal article" date="2000" name="Arch. Virol.">
        <title>Protein analysis of geographic isolates of shrimp white spot syndrome virus.</title>
        <authorList>
            <person name="Wang Q."/>
            <person name="Poulos B.T."/>
            <person name="Lightner D.V."/>
        </authorList>
    </citation>
    <scope>PROTEIN SEQUENCE</scope>
    <source>
        <strain>South Carolina</strain>
    </source>
</reference>
<sequence>VARGGKTKGRRG</sequence>
<organism>
    <name type="scientific">White spot syndrome virus</name>
    <name type="common">WSSV</name>
    <name type="synonym">White spot bacilliform virus</name>
    <dbReference type="NCBI Taxonomy" id="92652"/>
    <lineage>
        <taxon>Viruses</taxon>
        <taxon>Viruses incertae sedis</taxon>
        <taxon>Naldaviricetes</taxon>
        <taxon>Nimaviridae</taxon>
        <taxon>Whispovirus</taxon>
        <taxon>White spot syndrome virus</taxon>
    </lineage>
</organism>
<comment type="function">
    <text>Structural component of the virion.</text>
</comment>
<proteinExistence type="evidence at protein level"/>
<protein>
    <recommendedName>
        <fullName>14.5 kDa structural polyprotein</fullName>
    </recommendedName>
</protein>